<gene>
    <name type="primary">ribK</name>
    <name type="ordered locus">Pisl_0940</name>
</gene>
<protein>
    <recommendedName>
        <fullName>Riboflavin kinase</fullName>
        <shortName>RFK</shortName>
        <ecNumber>2.7.1.161</ecNumber>
    </recommendedName>
    <alternativeName>
        <fullName>CTP-dependent riboflavin kinase</fullName>
    </alternativeName>
    <alternativeName>
        <fullName>CTP:riboflavin 5'-phosphotransferase</fullName>
    </alternativeName>
    <alternativeName>
        <fullName>Flavokinase</fullName>
    </alternativeName>
</protein>
<name>RIFK_PYRIL</name>
<comment type="function">
    <text evidence="1">Catalyzes the CTP-dependent phosphorylation of riboflavin (vitamin B2) to form flavin mononucleotide (FMN).</text>
</comment>
<comment type="catalytic activity">
    <reaction>
        <text>riboflavin + CTP = CDP + FMN + H(+)</text>
        <dbReference type="Rhea" id="RHEA:25021"/>
        <dbReference type="ChEBI" id="CHEBI:15378"/>
        <dbReference type="ChEBI" id="CHEBI:37563"/>
        <dbReference type="ChEBI" id="CHEBI:57986"/>
        <dbReference type="ChEBI" id="CHEBI:58069"/>
        <dbReference type="ChEBI" id="CHEBI:58210"/>
        <dbReference type="EC" id="2.7.1.161"/>
    </reaction>
</comment>
<comment type="cofactor">
    <cofactor evidence="1">
        <name>Mg(2+)</name>
        <dbReference type="ChEBI" id="CHEBI:18420"/>
    </cofactor>
    <text evidence="1">Binds 1 Mg(2+) ion per subunit.</text>
</comment>
<comment type="pathway">
    <text>Cofactor biosynthesis; FMN biosynthesis; FMN from riboflavin (CTP route): step 1/1.</text>
</comment>
<comment type="similarity">
    <text evidence="2">Belongs to the archaeal riboflavin kinase family.</text>
</comment>
<organism>
    <name type="scientific">Pyrobaculum islandicum (strain DSM 4184 / JCM 9189 / GEO3)</name>
    <dbReference type="NCBI Taxonomy" id="384616"/>
    <lineage>
        <taxon>Archaea</taxon>
        <taxon>Thermoproteota</taxon>
        <taxon>Thermoprotei</taxon>
        <taxon>Thermoproteales</taxon>
        <taxon>Thermoproteaceae</taxon>
        <taxon>Pyrobaculum</taxon>
    </lineage>
</organism>
<sequence>MKCIDRRLIGDLIALSTVEGLSVTDAAEKLCLTRQGLYKLLRHLKKEGYVAEGPAIRLTQKGKDTLGIVLKDLLRYFNILSIRLSGRVVSGLGEGAFYMSLEGYRRAIEQKLGFTPYPGTLNIKLDPPSVVYKRYLDSLPGILIPGFSNGLRTYGAVKAFRAKLRDIEGAIVMPERTHHPTDVIEVIAPFKLREILGLRDGDRVEIEIYLE</sequence>
<reference key="1">
    <citation type="submission" date="2006-12" db="EMBL/GenBank/DDBJ databases">
        <title>Complete sequence of Pyrobaculum islandicum DSM 4184.</title>
        <authorList>
            <person name="Copeland A."/>
            <person name="Lucas S."/>
            <person name="Lapidus A."/>
            <person name="Barry K."/>
            <person name="Detter J.C."/>
            <person name="Glavina del Rio T."/>
            <person name="Dalin E."/>
            <person name="Tice H."/>
            <person name="Pitluck S."/>
            <person name="Meincke L."/>
            <person name="Brettin T."/>
            <person name="Bruce D."/>
            <person name="Han C."/>
            <person name="Tapia R."/>
            <person name="Gilna P."/>
            <person name="Schmutz J."/>
            <person name="Larimer F."/>
            <person name="Land M."/>
            <person name="Hauser L."/>
            <person name="Kyrpides N."/>
            <person name="Mikhailova N."/>
            <person name="Cozen A.E."/>
            <person name="Fitz-Gibbon S.T."/>
            <person name="House C.H."/>
            <person name="Saltikov C."/>
            <person name="Lowe T."/>
            <person name="Richardson P."/>
        </authorList>
    </citation>
    <scope>NUCLEOTIDE SEQUENCE [LARGE SCALE GENOMIC DNA]</scope>
    <source>
        <strain>DSM 4184 / JCM 9189 / GEO3</strain>
    </source>
</reference>
<dbReference type="EC" id="2.7.1.161"/>
<dbReference type="EMBL" id="CP000504">
    <property type="protein sequence ID" value="ABL88116.1"/>
    <property type="molecule type" value="Genomic_DNA"/>
</dbReference>
<dbReference type="RefSeq" id="WP_011762691.1">
    <property type="nucleotide sequence ID" value="NC_008701.1"/>
</dbReference>
<dbReference type="SMR" id="A1RT34"/>
<dbReference type="STRING" id="384616.Pisl_0940"/>
<dbReference type="GeneID" id="4616735"/>
<dbReference type="KEGG" id="pis:Pisl_0940"/>
<dbReference type="eggNOG" id="arCOG01904">
    <property type="taxonomic scope" value="Archaea"/>
</dbReference>
<dbReference type="HOGENOM" id="CLU_088476_0_0_2"/>
<dbReference type="OrthoDB" id="30955at2157"/>
<dbReference type="UniPathway" id="UPA00276">
    <property type="reaction ID" value="UER00929"/>
</dbReference>
<dbReference type="Proteomes" id="UP000002595">
    <property type="component" value="Chromosome"/>
</dbReference>
<dbReference type="GO" id="GO:0000287">
    <property type="term" value="F:magnesium ion binding"/>
    <property type="evidence" value="ECO:0007669"/>
    <property type="project" value="UniProtKB-UniRule"/>
</dbReference>
<dbReference type="GO" id="GO:0000166">
    <property type="term" value="F:nucleotide binding"/>
    <property type="evidence" value="ECO:0007669"/>
    <property type="project" value="UniProtKB-UniRule"/>
</dbReference>
<dbReference type="GO" id="GO:0008531">
    <property type="term" value="F:riboflavin kinase activity"/>
    <property type="evidence" value="ECO:0007669"/>
    <property type="project" value="InterPro"/>
</dbReference>
<dbReference type="GO" id="GO:0009398">
    <property type="term" value="P:FMN biosynthetic process"/>
    <property type="evidence" value="ECO:0007669"/>
    <property type="project" value="UniProtKB-UniRule"/>
</dbReference>
<dbReference type="GO" id="GO:0009231">
    <property type="term" value="P:riboflavin biosynthetic process"/>
    <property type="evidence" value="ECO:0007669"/>
    <property type="project" value="InterPro"/>
</dbReference>
<dbReference type="Gene3D" id="2.40.30.30">
    <property type="entry name" value="Riboflavin kinase-like"/>
    <property type="match status" value="1"/>
</dbReference>
<dbReference type="Gene3D" id="1.10.10.10">
    <property type="entry name" value="Winged helix-like DNA-binding domain superfamily/Winged helix DNA-binding domain"/>
    <property type="match status" value="1"/>
</dbReference>
<dbReference type="HAMAP" id="MF_01285">
    <property type="entry name" value="Riboflavin_kinase"/>
    <property type="match status" value="1"/>
</dbReference>
<dbReference type="InterPro" id="IPR039063">
    <property type="entry name" value="RibK_CTP-dep"/>
</dbReference>
<dbReference type="InterPro" id="IPR023470">
    <property type="entry name" value="Riboflavin_kinase_archaeal"/>
</dbReference>
<dbReference type="InterPro" id="IPR023602">
    <property type="entry name" value="Riboflavin_kinase_CTP-dep"/>
</dbReference>
<dbReference type="InterPro" id="IPR023465">
    <property type="entry name" value="Riboflavin_kinase_dom_sf"/>
</dbReference>
<dbReference type="InterPro" id="IPR036388">
    <property type="entry name" value="WH-like_DNA-bd_sf"/>
</dbReference>
<dbReference type="InterPro" id="IPR036390">
    <property type="entry name" value="WH_DNA-bd_sf"/>
</dbReference>
<dbReference type="PANTHER" id="PTHR40706">
    <property type="entry name" value="RIBOFLAVIN KINASE"/>
    <property type="match status" value="1"/>
</dbReference>
<dbReference type="PANTHER" id="PTHR40706:SF1">
    <property type="entry name" value="RIBOFLAVIN KINASE"/>
    <property type="match status" value="1"/>
</dbReference>
<dbReference type="Pfam" id="PF01982">
    <property type="entry name" value="CTP-dep_RFKase"/>
    <property type="match status" value="1"/>
</dbReference>
<dbReference type="SUPFAM" id="SSF82114">
    <property type="entry name" value="Riboflavin kinase-like"/>
    <property type="match status" value="1"/>
</dbReference>
<dbReference type="SUPFAM" id="SSF46785">
    <property type="entry name" value="Winged helix' DNA-binding domain"/>
    <property type="match status" value="1"/>
</dbReference>
<accession>A1RT34</accession>
<proteinExistence type="inferred from homology"/>
<keyword id="KW-0285">Flavoprotein</keyword>
<keyword id="KW-0288">FMN</keyword>
<keyword id="KW-0418">Kinase</keyword>
<keyword id="KW-0460">Magnesium</keyword>
<keyword id="KW-0479">Metal-binding</keyword>
<keyword id="KW-0547">Nucleotide-binding</keyword>
<keyword id="KW-0808">Transferase</keyword>
<feature type="chain" id="PRO_0000322104" description="Riboflavin kinase">
    <location>
        <begin position="1"/>
        <end position="211"/>
    </location>
</feature>
<feature type="region of interest" description="H-T-H motif-like">
    <location>
        <begin position="1"/>
        <end position="81"/>
    </location>
</feature>
<feature type="region of interest" description="Riboflavin kinase">
    <location>
        <begin position="82"/>
        <end position="211"/>
    </location>
</feature>
<feature type="binding site" evidence="1">
    <location>
        <begin position="91"/>
        <end position="96"/>
    </location>
    <ligand>
        <name>CDP</name>
        <dbReference type="ChEBI" id="CHEBI:58069"/>
    </ligand>
</feature>
<feature type="binding site" evidence="1">
    <location>
        <position position="120"/>
    </location>
    <ligand>
        <name>Mg(2+)</name>
        <dbReference type="ChEBI" id="CHEBI:18420"/>
    </ligand>
</feature>
<feature type="binding site" evidence="1">
    <location>
        <position position="122"/>
    </location>
    <ligand>
        <name>Mg(2+)</name>
        <dbReference type="ChEBI" id="CHEBI:18420"/>
    </ligand>
</feature>
<feature type="binding site" evidence="1">
    <location>
        <position position="177"/>
    </location>
    <ligand>
        <name>FMN</name>
        <dbReference type="ChEBI" id="CHEBI:58210"/>
    </ligand>
</feature>
<feature type="binding site" evidence="1">
    <location>
        <position position="185"/>
    </location>
    <ligand>
        <name>FMN</name>
        <dbReference type="ChEBI" id="CHEBI:58210"/>
    </ligand>
</feature>
<feature type="binding site" evidence="1">
    <location>
        <begin position="190"/>
        <end position="193"/>
    </location>
    <ligand>
        <name>CDP</name>
        <dbReference type="ChEBI" id="CHEBI:58069"/>
    </ligand>
</feature>
<evidence type="ECO:0000250" key="1"/>
<evidence type="ECO:0000305" key="2"/>